<proteinExistence type="inferred from homology"/>
<geneLocation type="mitochondrion"/>
<gene>
    <name type="primary">MT-CYB</name>
    <name type="synonym">COB</name>
    <name type="synonym">CYTB</name>
    <name type="synonym">MTCYB</name>
</gene>
<comment type="function">
    <text evidence="2">Component of the ubiquinol-cytochrome c reductase complex (complex III or cytochrome b-c1 complex) that is part of the mitochondrial respiratory chain. The b-c1 complex mediates electron transfer from ubiquinol to cytochrome c. Contributes to the generation of a proton gradient across the mitochondrial membrane that is then used for ATP synthesis.</text>
</comment>
<comment type="cofactor">
    <cofactor evidence="2">
        <name>heme b</name>
        <dbReference type="ChEBI" id="CHEBI:60344"/>
    </cofactor>
    <text evidence="2">Binds 2 heme b groups non-covalently.</text>
</comment>
<comment type="subunit">
    <text evidence="2">The cytochrome bc1 complex contains 11 subunits: 3 respiratory subunits (MT-CYB, CYC1 and UQCRFS1), 2 core proteins (UQCRC1 and UQCRC2) and 6 low-molecular weight proteins (UQCRH/QCR6, UQCRB/QCR7, UQCRQ/QCR8, UQCR10/QCR9, UQCR11/QCR10 and a cleavage product of UQCRFS1). This cytochrome bc1 complex then forms a dimer.</text>
</comment>
<comment type="subcellular location">
    <subcellularLocation>
        <location evidence="2">Mitochondrion inner membrane</location>
        <topology evidence="2">Multi-pass membrane protein</topology>
    </subcellularLocation>
</comment>
<comment type="miscellaneous">
    <text evidence="1">Heme 1 (or BL or b562) is low-potential and absorbs at about 562 nm, and heme 2 (or BH or b566) is high-potential and absorbs at about 566 nm.</text>
</comment>
<comment type="similarity">
    <text evidence="3 4">Belongs to the cytochrome b family.</text>
</comment>
<comment type="caution">
    <text evidence="2">The full-length protein contains only eight transmembrane helices, not nine as predicted by bioinformatics tools.</text>
</comment>
<organism>
    <name type="scientific">Potorous tridactylus</name>
    <name type="common">Potoroo</name>
    <dbReference type="NCBI Taxonomy" id="9310"/>
    <lineage>
        <taxon>Eukaryota</taxon>
        <taxon>Metazoa</taxon>
        <taxon>Chordata</taxon>
        <taxon>Craniata</taxon>
        <taxon>Vertebrata</taxon>
        <taxon>Euteleostomi</taxon>
        <taxon>Mammalia</taxon>
        <taxon>Metatheria</taxon>
        <taxon>Diprotodontia</taxon>
        <taxon>Potoroidae</taxon>
        <taxon>Potorous</taxon>
    </lineage>
</organism>
<name>CYB_POTTR</name>
<keyword id="KW-0249">Electron transport</keyword>
<keyword id="KW-0349">Heme</keyword>
<keyword id="KW-0408">Iron</keyword>
<keyword id="KW-0472">Membrane</keyword>
<keyword id="KW-0479">Metal-binding</keyword>
<keyword id="KW-0496">Mitochondrion</keyword>
<keyword id="KW-0999">Mitochondrion inner membrane</keyword>
<keyword id="KW-0679">Respiratory chain</keyword>
<keyword id="KW-0812">Transmembrane</keyword>
<keyword id="KW-1133">Transmembrane helix</keyword>
<keyword id="KW-0813">Transport</keyword>
<keyword id="KW-0830">Ubiquinone</keyword>
<accession>Q5QS02</accession>
<sequence length="381" mass="42789">MTNLRKTHPLIKIINHSFIDLPAPSNISAWWNFGSLLGICLIIQILTGLFLAMHYTSDTLTAFSSVAHICRDVNYGWLIRNLHANGASMFFMCLFLHVGRGIYYGSYLYKETWNIGVILLLTVMATAFVGYVLPWGQMSFWGATVITNLLSAIPYIGTTLVEWIWGGFSVDKATLTRFFAFHFILPFIIVALVVVHLLFLHETGSSNPSGINPDSDKIPFHPYYTIKDILGLMIMLLTLLALALFSPDMLGDPDNFSPASPLNTPPHIKPEWYFLFAYAILRSIPNKLGGVLALLASILILLLIPLLHTSKQRSLMFRPISQTLFWMLTADLITLPWIGGQPVEQPFIIIGQVASILYFSLIIILMPLAGLLENYMLKPKW</sequence>
<reference key="1">
    <citation type="journal article" date="2004" name="Gene">
        <title>Marsupial relationships and a timeline for marsupial radiation in South Gondwana.</title>
        <authorList>
            <person name="Nilsson M.A."/>
            <person name="Arnason U."/>
            <person name="Spencer P.B.S."/>
            <person name="Janke A."/>
        </authorList>
    </citation>
    <scope>NUCLEOTIDE SEQUENCE [GENOMIC DNA]</scope>
    <source>
        <tissue>Liver</tissue>
    </source>
</reference>
<protein>
    <recommendedName>
        <fullName>Cytochrome b</fullName>
    </recommendedName>
    <alternativeName>
        <fullName>Complex III subunit 3</fullName>
    </alternativeName>
    <alternativeName>
        <fullName>Complex III subunit III</fullName>
    </alternativeName>
    <alternativeName>
        <fullName>Cytochrome b-c1 complex subunit 3</fullName>
    </alternativeName>
    <alternativeName>
        <fullName>Ubiquinol-cytochrome-c reductase complex cytochrome b subunit</fullName>
    </alternativeName>
</protein>
<dbReference type="EMBL" id="AJ639873">
    <property type="protein sequence ID" value="CAG26445.1"/>
    <property type="molecule type" value="Genomic_DNA"/>
</dbReference>
<dbReference type="RefSeq" id="YP_161285.1">
    <property type="nucleotide sequence ID" value="NC_006524.1"/>
</dbReference>
<dbReference type="SMR" id="Q5QS02"/>
<dbReference type="GeneID" id="3187004"/>
<dbReference type="CTD" id="4519"/>
<dbReference type="GO" id="GO:0005743">
    <property type="term" value="C:mitochondrial inner membrane"/>
    <property type="evidence" value="ECO:0007669"/>
    <property type="project" value="UniProtKB-SubCell"/>
</dbReference>
<dbReference type="GO" id="GO:0045275">
    <property type="term" value="C:respiratory chain complex III"/>
    <property type="evidence" value="ECO:0007669"/>
    <property type="project" value="InterPro"/>
</dbReference>
<dbReference type="GO" id="GO:0046872">
    <property type="term" value="F:metal ion binding"/>
    <property type="evidence" value="ECO:0007669"/>
    <property type="project" value="UniProtKB-KW"/>
</dbReference>
<dbReference type="GO" id="GO:0008121">
    <property type="term" value="F:ubiquinol-cytochrome-c reductase activity"/>
    <property type="evidence" value="ECO:0007669"/>
    <property type="project" value="InterPro"/>
</dbReference>
<dbReference type="GO" id="GO:0006122">
    <property type="term" value="P:mitochondrial electron transport, ubiquinol to cytochrome c"/>
    <property type="evidence" value="ECO:0007669"/>
    <property type="project" value="TreeGrafter"/>
</dbReference>
<dbReference type="CDD" id="cd00290">
    <property type="entry name" value="cytochrome_b_C"/>
    <property type="match status" value="1"/>
</dbReference>
<dbReference type="CDD" id="cd00284">
    <property type="entry name" value="Cytochrome_b_N"/>
    <property type="match status" value="1"/>
</dbReference>
<dbReference type="FunFam" id="1.20.810.10:FF:000002">
    <property type="entry name" value="Cytochrome b"/>
    <property type="match status" value="1"/>
</dbReference>
<dbReference type="Gene3D" id="1.20.810.10">
    <property type="entry name" value="Cytochrome Bc1 Complex, Chain C"/>
    <property type="match status" value="1"/>
</dbReference>
<dbReference type="InterPro" id="IPR005798">
    <property type="entry name" value="Cyt_b/b6_C"/>
</dbReference>
<dbReference type="InterPro" id="IPR036150">
    <property type="entry name" value="Cyt_b/b6_C_sf"/>
</dbReference>
<dbReference type="InterPro" id="IPR005797">
    <property type="entry name" value="Cyt_b/b6_N"/>
</dbReference>
<dbReference type="InterPro" id="IPR027387">
    <property type="entry name" value="Cytb/b6-like_sf"/>
</dbReference>
<dbReference type="InterPro" id="IPR030689">
    <property type="entry name" value="Cytochrome_b"/>
</dbReference>
<dbReference type="InterPro" id="IPR048260">
    <property type="entry name" value="Cytochrome_b_C_euk/bac"/>
</dbReference>
<dbReference type="InterPro" id="IPR048259">
    <property type="entry name" value="Cytochrome_b_N_euk/bac"/>
</dbReference>
<dbReference type="InterPro" id="IPR016174">
    <property type="entry name" value="Di-haem_cyt_TM"/>
</dbReference>
<dbReference type="PANTHER" id="PTHR19271">
    <property type="entry name" value="CYTOCHROME B"/>
    <property type="match status" value="1"/>
</dbReference>
<dbReference type="PANTHER" id="PTHR19271:SF16">
    <property type="entry name" value="CYTOCHROME B"/>
    <property type="match status" value="1"/>
</dbReference>
<dbReference type="Pfam" id="PF00032">
    <property type="entry name" value="Cytochrom_B_C"/>
    <property type="match status" value="1"/>
</dbReference>
<dbReference type="Pfam" id="PF00033">
    <property type="entry name" value="Cytochrome_B"/>
    <property type="match status" value="1"/>
</dbReference>
<dbReference type="PIRSF" id="PIRSF038885">
    <property type="entry name" value="COB"/>
    <property type="match status" value="1"/>
</dbReference>
<dbReference type="SUPFAM" id="SSF81648">
    <property type="entry name" value="a domain/subunit of cytochrome bc1 complex (Ubiquinol-cytochrome c reductase)"/>
    <property type="match status" value="1"/>
</dbReference>
<dbReference type="SUPFAM" id="SSF81342">
    <property type="entry name" value="Transmembrane di-heme cytochromes"/>
    <property type="match status" value="1"/>
</dbReference>
<dbReference type="PROSITE" id="PS51003">
    <property type="entry name" value="CYTB_CTER"/>
    <property type="match status" value="1"/>
</dbReference>
<dbReference type="PROSITE" id="PS51002">
    <property type="entry name" value="CYTB_NTER"/>
    <property type="match status" value="1"/>
</dbReference>
<evidence type="ECO:0000250" key="1"/>
<evidence type="ECO:0000250" key="2">
    <source>
        <dbReference type="UniProtKB" id="P00157"/>
    </source>
</evidence>
<evidence type="ECO:0000255" key="3">
    <source>
        <dbReference type="PROSITE-ProRule" id="PRU00967"/>
    </source>
</evidence>
<evidence type="ECO:0000255" key="4">
    <source>
        <dbReference type="PROSITE-ProRule" id="PRU00968"/>
    </source>
</evidence>
<feature type="chain" id="PRO_0000254847" description="Cytochrome b">
    <location>
        <begin position="1"/>
        <end position="381"/>
    </location>
</feature>
<feature type="transmembrane region" description="Helical" evidence="2">
    <location>
        <begin position="33"/>
        <end position="53"/>
    </location>
</feature>
<feature type="transmembrane region" description="Helical" evidence="2">
    <location>
        <begin position="77"/>
        <end position="98"/>
    </location>
</feature>
<feature type="transmembrane region" description="Helical" evidence="2">
    <location>
        <begin position="113"/>
        <end position="133"/>
    </location>
</feature>
<feature type="transmembrane region" description="Helical" evidence="2">
    <location>
        <begin position="178"/>
        <end position="198"/>
    </location>
</feature>
<feature type="transmembrane region" description="Helical" evidence="2">
    <location>
        <begin position="226"/>
        <end position="246"/>
    </location>
</feature>
<feature type="transmembrane region" description="Helical" evidence="2">
    <location>
        <begin position="288"/>
        <end position="308"/>
    </location>
</feature>
<feature type="transmembrane region" description="Helical" evidence="2">
    <location>
        <begin position="320"/>
        <end position="340"/>
    </location>
</feature>
<feature type="transmembrane region" description="Helical" evidence="2">
    <location>
        <begin position="347"/>
        <end position="367"/>
    </location>
</feature>
<feature type="binding site" description="axial binding residue" evidence="2">
    <location>
        <position position="83"/>
    </location>
    <ligand>
        <name>heme b</name>
        <dbReference type="ChEBI" id="CHEBI:60344"/>
        <label>b562</label>
    </ligand>
    <ligandPart>
        <name>Fe</name>
        <dbReference type="ChEBI" id="CHEBI:18248"/>
    </ligandPart>
</feature>
<feature type="binding site" description="axial binding residue" evidence="2">
    <location>
        <position position="97"/>
    </location>
    <ligand>
        <name>heme b</name>
        <dbReference type="ChEBI" id="CHEBI:60344"/>
        <label>b566</label>
    </ligand>
    <ligandPart>
        <name>Fe</name>
        <dbReference type="ChEBI" id="CHEBI:18248"/>
    </ligandPart>
</feature>
<feature type="binding site" description="axial binding residue" evidence="2">
    <location>
        <position position="182"/>
    </location>
    <ligand>
        <name>heme b</name>
        <dbReference type="ChEBI" id="CHEBI:60344"/>
        <label>b562</label>
    </ligand>
    <ligandPart>
        <name>Fe</name>
        <dbReference type="ChEBI" id="CHEBI:18248"/>
    </ligandPart>
</feature>
<feature type="binding site" description="axial binding residue" evidence="2">
    <location>
        <position position="196"/>
    </location>
    <ligand>
        <name>heme b</name>
        <dbReference type="ChEBI" id="CHEBI:60344"/>
        <label>b566</label>
    </ligand>
    <ligandPart>
        <name>Fe</name>
        <dbReference type="ChEBI" id="CHEBI:18248"/>
    </ligandPart>
</feature>
<feature type="binding site" evidence="2">
    <location>
        <position position="201"/>
    </location>
    <ligand>
        <name>a ubiquinone</name>
        <dbReference type="ChEBI" id="CHEBI:16389"/>
    </ligand>
</feature>